<feature type="chain" id="PRO_1000127537" description="D-aminoacyl-tRNA deacylase">
    <location>
        <begin position="1"/>
        <end position="145"/>
    </location>
</feature>
<feature type="short sequence motif" description="Gly-cisPro motif, important for rejection of L-amino acids" evidence="1">
    <location>
        <begin position="137"/>
        <end position="138"/>
    </location>
</feature>
<reference key="1">
    <citation type="journal article" date="2006" name="J. Bacteriol.">
        <title>Chromosome rearrangement and diversification of Francisella tularensis revealed by the type B (OSU18) genome sequence.</title>
        <authorList>
            <person name="Petrosino J.F."/>
            <person name="Xiang Q."/>
            <person name="Karpathy S.E."/>
            <person name="Jiang H."/>
            <person name="Yerrapragada S."/>
            <person name="Liu Y."/>
            <person name="Gioia J."/>
            <person name="Hemphill L."/>
            <person name="Gonzalez A."/>
            <person name="Raghavan T.M."/>
            <person name="Uzman A."/>
            <person name="Fox G.E."/>
            <person name="Highlander S."/>
            <person name="Reichard M."/>
            <person name="Morton R.J."/>
            <person name="Clinkenbeard K.D."/>
            <person name="Weinstock G.M."/>
        </authorList>
    </citation>
    <scope>NUCLEOTIDE SEQUENCE [LARGE SCALE GENOMIC DNA]</scope>
    <source>
        <strain>OSU18</strain>
    </source>
</reference>
<gene>
    <name evidence="1" type="primary">dtd</name>
    <name type="ordered locus">FTH_0049</name>
</gene>
<dbReference type="EC" id="3.1.1.96" evidence="1"/>
<dbReference type="EMBL" id="CP000437">
    <property type="protein sequence ID" value="ABI82105.1"/>
    <property type="molecule type" value="Genomic_DNA"/>
</dbReference>
<dbReference type="RefSeq" id="WP_003017627.1">
    <property type="nucleotide sequence ID" value="NC_017463.1"/>
</dbReference>
<dbReference type="SMR" id="Q0BP79"/>
<dbReference type="KEGG" id="fth:FTH_0049"/>
<dbReference type="GO" id="GO:0005737">
    <property type="term" value="C:cytoplasm"/>
    <property type="evidence" value="ECO:0007669"/>
    <property type="project" value="UniProtKB-SubCell"/>
</dbReference>
<dbReference type="GO" id="GO:0051500">
    <property type="term" value="F:D-tyrosyl-tRNA(Tyr) deacylase activity"/>
    <property type="evidence" value="ECO:0007669"/>
    <property type="project" value="TreeGrafter"/>
</dbReference>
<dbReference type="GO" id="GO:0106026">
    <property type="term" value="F:Gly-tRNA(Ala) deacylase activity"/>
    <property type="evidence" value="ECO:0007669"/>
    <property type="project" value="UniProtKB-UniRule"/>
</dbReference>
<dbReference type="GO" id="GO:0043908">
    <property type="term" value="F:Ser(Gly)-tRNA(Ala) hydrolase activity"/>
    <property type="evidence" value="ECO:0007669"/>
    <property type="project" value="UniProtKB-UniRule"/>
</dbReference>
<dbReference type="GO" id="GO:0000049">
    <property type="term" value="F:tRNA binding"/>
    <property type="evidence" value="ECO:0007669"/>
    <property type="project" value="UniProtKB-UniRule"/>
</dbReference>
<dbReference type="GO" id="GO:0019478">
    <property type="term" value="P:D-amino acid catabolic process"/>
    <property type="evidence" value="ECO:0007669"/>
    <property type="project" value="UniProtKB-UniRule"/>
</dbReference>
<dbReference type="FunFam" id="3.50.80.10:FF:000001">
    <property type="entry name" value="D-aminoacyl-tRNA deacylase"/>
    <property type="match status" value="1"/>
</dbReference>
<dbReference type="Gene3D" id="3.50.80.10">
    <property type="entry name" value="D-tyrosyl-tRNA(Tyr) deacylase"/>
    <property type="match status" value="1"/>
</dbReference>
<dbReference type="HAMAP" id="MF_00518">
    <property type="entry name" value="Deacylase_Dtd"/>
    <property type="match status" value="1"/>
</dbReference>
<dbReference type="InterPro" id="IPR003732">
    <property type="entry name" value="Daa-tRNA_deacyls_DTD"/>
</dbReference>
<dbReference type="InterPro" id="IPR023509">
    <property type="entry name" value="DTD-like_sf"/>
</dbReference>
<dbReference type="NCBIfam" id="TIGR00256">
    <property type="entry name" value="D-aminoacyl-tRNA deacylase"/>
    <property type="match status" value="1"/>
</dbReference>
<dbReference type="PANTHER" id="PTHR10472:SF5">
    <property type="entry name" value="D-AMINOACYL-TRNA DEACYLASE 1"/>
    <property type="match status" value="1"/>
</dbReference>
<dbReference type="PANTHER" id="PTHR10472">
    <property type="entry name" value="D-TYROSYL-TRNA TYR DEACYLASE"/>
    <property type="match status" value="1"/>
</dbReference>
<dbReference type="Pfam" id="PF02580">
    <property type="entry name" value="Tyr_Deacylase"/>
    <property type="match status" value="1"/>
</dbReference>
<dbReference type="SUPFAM" id="SSF69500">
    <property type="entry name" value="DTD-like"/>
    <property type="match status" value="1"/>
</dbReference>
<accession>Q0BP79</accession>
<proteinExistence type="inferred from homology"/>
<sequence>MLSIIQRVNCAKVVVDNQKVADINKGILALVCVEKEDTQQNFEKMADKIIKYRIFEDDAGKMNLSLVDIDAEIILVPQFTLAADTKKGNRPSFSSGCPPEIAKEKFKEFENIFRRKYNKVQTGIFGADMKVSLTNDGPVTFSFKI</sequence>
<name>DTD_FRATO</name>
<comment type="function">
    <text evidence="1">An aminoacyl-tRNA editing enzyme that deacylates mischarged D-aminoacyl-tRNAs. Also deacylates mischarged glycyl-tRNA(Ala), protecting cells against glycine mischarging by AlaRS. Acts via tRNA-based rather than protein-based catalysis; rejects L-amino acids rather than detecting D-amino acids in the active site. By recycling D-aminoacyl-tRNA to D-amino acids and free tRNA molecules, this enzyme counteracts the toxicity associated with the formation of D-aminoacyl-tRNA entities in vivo and helps enforce protein L-homochirality.</text>
</comment>
<comment type="catalytic activity">
    <reaction evidence="1">
        <text>glycyl-tRNA(Ala) + H2O = tRNA(Ala) + glycine + H(+)</text>
        <dbReference type="Rhea" id="RHEA:53744"/>
        <dbReference type="Rhea" id="RHEA-COMP:9657"/>
        <dbReference type="Rhea" id="RHEA-COMP:13640"/>
        <dbReference type="ChEBI" id="CHEBI:15377"/>
        <dbReference type="ChEBI" id="CHEBI:15378"/>
        <dbReference type="ChEBI" id="CHEBI:57305"/>
        <dbReference type="ChEBI" id="CHEBI:78442"/>
        <dbReference type="ChEBI" id="CHEBI:78522"/>
        <dbReference type="EC" id="3.1.1.96"/>
    </reaction>
</comment>
<comment type="catalytic activity">
    <reaction evidence="1">
        <text>a D-aminoacyl-tRNA + H2O = a tRNA + a D-alpha-amino acid + H(+)</text>
        <dbReference type="Rhea" id="RHEA:13953"/>
        <dbReference type="Rhea" id="RHEA-COMP:10123"/>
        <dbReference type="Rhea" id="RHEA-COMP:10124"/>
        <dbReference type="ChEBI" id="CHEBI:15377"/>
        <dbReference type="ChEBI" id="CHEBI:15378"/>
        <dbReference type="ChEBI" id="CHEBI:59871"/>
        <dbReference type="ChEBI" id="CHEBI:78442"/>
        <dbReference type="ChEBI" id="CHEBI:79333"/>
        <dbReference type="EC" id="3.1.1.96"/>
    </reaction>
</comment>
<comment type="subunit">
    <text evidence="1">Homodimer.</text>
</comment>
<comment type="subcellular location">
    <subcellularLocation>
        <location evidence="1">Cytoplasm</location>
    </subcellularLocation>
</comment>
<comment type="domain">
    <text evidence="1">A Gly-cisPro motif from one monomer fits into the active site of the other monomer to allow specific chiral rejection of L-amino acids.</text>
</comment>
<comment type="similarity">
    <text evidence="1">Belongs to the DTD family.</text>
</comment>
<evidence type="ECO:0000255" key="1">
    <source>
        <dbReference type="HAMAP-Rule" id="MF_00518"/>
    </source>
</evidence>
<keyword id="KW-0963">Cytoplasm</keyword>
<keyword id="KW-0378">Hydrolase</keyword>
<keyword id="KW-0694">RNA-binding</keyword>
<keyword id="KW-0820">tRNA-binding</keyword>
<protein>
    <recommendedName>
        <fullName evidence="1">D-aminoacyl-tRNA deacylase</fullName>
        <shortName evidence="1">DTD</shortName>
        <ecNumber evidence="1">3.1.1.96</ecNumber>
    </recommendedName>
    <alternativeName>
        <fullName evidence="1">Gly-tRNA(Ala) deacylase</fullName>
    </alternativeName>
</protein>
<organism>
    <name type="scientific">Francisella tularensis subsp. holarctica (strain OSU18)</name>
    <dbReference type="NCBI Taxonomy" id="393011"/>
    <lineage>
        <taxon>Bacteria</taxon>
        <taxon>Pseudomonadati</taxon>
        <taxon>Pseudomonadota</taxon>
        <taxon>Gammaproteobacteria</taxon>
        <taxon>Thiotrichales</taxon>
        <taxon>Francisellaceae</taxon>
        <taxon>Francisella</taxon>
    </lineage>
</organism>